<feature type="chain" id="PRO_0000294623" description="ATP-dependent RNA helicase DBP4">
    <location>
        <begin position="1"/>
        <end position="798"/>
    </location>
</feature>
<feature type="domain" description="Helicase ATP-binding" evidence="2">
    <location>
        <begin position="80"/>
        <end position="254"/>
    </location>
</feature>
<feature type="domain" description="Helicase C-terminal" evidence="3">
    <location>
        <begin position="280"/>
        <end position="435"/>
    </location>
</feature>
<feature type="region of interest" description="Disordered" evidence="4">
    <location>
        <begin position="1"/>
        <end position="30"/>
    </location>
</feature>
<feature type="region of interest" description="Disordered" evidence="4">
    <location>
        <begin position="503"/>
        <end position="544"/>
    </location>
</feature>
<feature type="region of interest" description="Disordered" evidence="4">
    <location>
        <begin position="653"/>
        <end position="781"/>
    </location>
</feature>
<feature type="short sequence motif" description="Q motif">
    <location>
        <begin position="49"/>
        <end position="77"/>
    </location>
</feature>
<feature type="short sequence motif" description="DEAD box">
    <location>
        <begin position="202"/>
        <end position="205"/>
    </location>
</feature>
<feature type="compositionally biased region" description="Basic and acidic residues" evidence="4">
    <location>
        <begin position="16"/>
        <end position="30"/>
    </location>
</feature>
<feature type="compositionally biased region" description="Basic and acidic residues" evidence="4">
    <location>
        <begin position="529"/>
        <end position="544"/>
    </location>
</feature>
<feature type="compositionally biased region" description="Basic and acidic residues" evidence="4">
    <location>
        <begin position="666"/>
        <end position="689"/>
    </location>
</feature>
<feature type="compositionally biased region" description="Basic residues" evidence="4">
    <location>
        <begin position="690"/>
        <end position="704"/>
    </location>
</feature>
<feature type="compositionally biased region" description="Basic and acidic residues" evidence="4">
    <location>
        <begin position="767"/>
        <end position="781"/>
    </location>
</feature>
<feature type="binding site" evidence="2">
    <location>
        <begin position="93"/>
        <end position="100"/>
    </location>
    <ligand>
        <name>ATP</name>
        <dbReference type="ChEBI" id="CHEBI:30616"/>
    </ligand>
</feature>
<protein>
    <recommendedName>
        <fullName>ATP-dependent RNA helicase DBP4</fullName>
        <ecNumber>3.6.4.13</ecNumber>
    </recommendedName>
</protein>
<sequence length="798" mass="89657">MAHKGKAAPAKPPTSHKKEVKSLKRKRGQEELSTLRKAIDEFDLKSTPKAFAELPLSEPTAKGVRDSHFETLTDIQARAIPLALKGRDILGAAKTGSGKTLAFLVPLLEKLYREQWTQEAKLGALVLSPTRELAVQTFQVLRKIGRHHLFSAGLVIGGKSVREEAEALSRMNILIGTPGRILQHLDQTHGFDVDNLQLLVLDEADRIMDLGFQRDVDALVQHLPTTRQTLLFSATQSKKVSDLARLSLKDPEYVSVHAEATTATPSTLQQHYIVTPLPEKLDTLWGFIKANLKSKMVVFLSSGKQVRFVYESFRQMQPGIPLLHMHGRQKQLARLDVTKRFDSSKHACLFATDVIARGIDFTGVDWVVQVDAPEDTDDYIHRVGRTARYEREGKAVIFLDPSEEAGMLKRLERKKVPITKVTAKDSKKKSIRDELQSICWKSHDVKYLAQKAFISYARAVHRATERDEKHNENSDQVFKFDKLDLEGFAKSMGLAGAPQIKFQKGEDVKRMKNAPRAPLSSGSEDESGDDKPRRRKKDEVRTKADKMFERTNQDVLSKHYRNLVEDGENDEEEDFFTTKRVLRGDELDEAAGGAGAGLPTAKTIDLGGTELVLDSKRREKLIKSKKQLAKLKGKGQKLVFDDDGVAHPLYTLQDEDDFKQQGPAEALRKQFVEQEGDKVKEADIDDKALAKQKKREKKLKRKARERGEAEGNGGPQLAGGDDDDEDPLEMLRSLPMAGTTRDSGDDESEDERPKKKPKKWFQDDSDDERKPKSKVIELDHEPDTLEDYEAIAAGLLDD</sequence>
<gene>
    <name type="primary">DBP4</name>
    <name type="ORF">MGG_08049</name>
</gene>
<name>DBP4_PYRO7</name>
<evidence type="ECO:0000250" key="1"/>
<evidence type="ECO:0000255" key="2">
    <source>
        <dbReference type="PROSITE-ProRule" id="PRU00541"/>
    </source>
</evidence>
<evidence type="ECO:0000255" key="3">
    <source>
        <dbReference type="PROSITE-ProRule" id="PRU00542"/>
    </source>
</evidence>
<evidence type="ECO:0000256" key="4">
    <source>
        <dbReference type="SAM" id="MobiDB-lite"/>
    </source>
</evidence>
<evidence type="ECO:0000305" key="5"/>
<reference key="1">
    <citation type="journal article" date="2005" name="Nature">
        <title>The genome sequence of the rice blast fungus Magnaporthe grisea.</title>
        <authorList>
            <person name="Dean R.A."/>
            <person name="Talbot N.J."/>
            <person name="Ebbole D.J."/>
            <person name="Farman M.L."/>
            <person name="Mitchell T.K."/>
            <person name="Orbach M.J."/>
            <person name="Thon M.R."/>
            <person name="Kulkarni R."/>
            <person name="Xu J.-R."/>
            <person name="Pan H."/>
            <person name="Read N.D."/>
            <person name="Lee Y.-H."/>
            <person name="Carbone I."/>
            <person name="Brown D."/>
            <person name="Oh Y.Y."/>
            <person name="Donofrio N."/>
            <person name="Jeong J.S."/>
            <person name="Soanes D.M."/>
            <person name="Djonovic S."/>
            <person name="Kolomiets E."/>
            <person name="Rehmeyer C."/>
            <person name="Li W."/>
            <person name="Harding M."/>
            <person name="Kim S."/>
            <person name="Lebrun M.-H."/>
            <person name="Bohnert H."/>
            <person name="Coughlan S."/>
            <person name="Butler J."/>
            <person name="Calvo S.E."/>
            <person name="Ma L.-J."/>
            <person name="Nicol R."/>
            <person name="Purcell S."/>
            <person name="Nusbaum C."/>
            <person name="Galagan J.E."/>
            <person name="Birren B.W."/>
        </authorList>
    </citation>
    <scope>NUCLEOTIDE SEQUENCE [LARGE SCALE GENOMIC DNA]</scope>
    <source>
        <strain>70-15 / ATCC MYA-4617 / FGSC 8958</strain>
    </source>
</reference>
<comment type="function">
    <text evidence="1">ATP-dependent RNA helicase required for ribosome biogenesis. Involved in the release of U14 snoRNA in pre-ribosomal complexes. Required for pre-rRNA cleavage at site A2 (By similarity).</text>
</comment>
<comment type="catalytic activity">
    <reaction>
        <text>ATP + H2O = ADP + phosphate + H(+)</text>
        <dbReference type="Rhea" id="RHEA:13065"/>
        <dbReference type="ChEBI" id="CHEBI:15377"/>
        <dbReference type="ChEBI" id="CHEBI:15378"/>
        <dbReference type="ChEBI" id="CHEBI:30616"/>
        <dbReference type="ChEBI" id="CHEBI:43474"/>
        <dbReference type="ChEBI" id="CHEBI:456216"/>
        <dbReference type="EC" id="3.6.4.13"/>
    </reaction>
</comment>
<comment type="subunit">
    <text evidence="1">Interacts with the U3 and U14 snoRNAs. Associates with pre-ribosomal complexes (By similarity).</text>
</comment>
<comment type="subcellular location">
    <subcellularLocation>
        <location evidence="1">Nucleus</location>
        <location evidence="1">Nucleolus</location>
    </subcellularLocation>
</comment>
<comment type="domain">
    <text>The Q motif is unique to and characteristic of the DEAD box family of RNA helicases and controls ATP binding and hydrolysis.</text>
</comment>
<comment type="similarity">
    <text evidence="5">Belongs to the DEAD box helicase family. DDX10/DBP4 subfamily.</text>
</comment>
<keyword id="KW-0067">ATP-binding</keyword>
<keyword id="KW-0347">Helicase</keyword>
<keyword id="KW-0378">Hydrolase</keyword>
<keyword id="KW-0547">Nucleotide-binding</keyword>
<keyword id="KW-0539">Nucleus</keyword>
<keyword id="KW-1185">Reference proteome</keyword>
<keyword id="KW-0690">Ribosome biogenesis</keyword>
<keyword id="KW-0694">RNA-binding</keyword>
<keyword id="KW-0698">rRNA processing</keyword>
<accession>A4RGU2</accession>
<accession>G4MXQ6</accession>
<proteinExistence type="inferred from homology"/>
<organism>
    <name type="scientific">Pyricularia oryzae (strain 70-15 / ATCC MYA-4617 / FGSC 8958)</name>
    <name type="common">Rice blast fungus</name>
    <name type="synonym">Magnaporthe oryzae</name>
    <dbReference type="NCBI Taxonomy" id="242507"/>
    <lineage>
        <taxon>Eukaryota</taxon>
        <taxon>Fungi</taxon>
        <taxon>Dikarya</taxon>
        <taxon>Ascomycota</taxon>
        <taxon>Pezizomycotina</taxon>
        <taxon>Sordariomycetes</taxon>
        <taxon>Sordariomycetidae</taxon>
        <taxon>Magnaporthales</taxon>
        <taxon>Pyriculariaceae</taxon>
        <taxon>Pyricularia</taxon>
    </lineage>
</organism>
<dbReference type="EC" id="3.6.4.13"/>
<dbReference type="EMBL" id="CM001232">
    <property type="protein sequence ID" value="EHA55193.1"/>
    <property type="molecule type" value="Genomic_DNA"/>
</dbReference>
<dbReference type="RefSeq" id="XP_003715000.1">
    <property type="nucleotide sequence ID" value="XM_003714952.1"/>
</dbReference>
<dbReference type="SMR" id="A4RGU2"/>
<dbReference type="FunCoup" id="A4RGU2">
    <property type="interactions" value="1026"/>
</dbReference>
<dbReference type="STRING" id="242507.A4RGU2"/>
<dbReference type="EnsemblFungi" id="MGG_08049T0">
    <property type="protein sequence ID" value="MGG_08049T0"/>
    <property type="gene ID" value="MGG_08049"/>
</dbReference>
<dbReference type="GeneID" id="2678339"/>
<dbReference type="KEGG" id="mgr:MGG_08049"/>
<dbReference type="VEuPathDB" id="FungiDB:MGG_08049"/>
<dbReference type="eggNOG" id="KOG0343">
    <property type="taxonomic scope" value="Eukaryota"/>
</dbReference>
<dbReference type="HOGENOM" id="CLU_003041_26_1_1"/>
<dbReference type="InParanoid" id="A4RGU2"/>
<dbReference type="OMA" id="YDKMFER"/>
<dbReference type="OrthoDB" id="10259640at2759"/>
<dbReference type="Proteomes" id="UP000009058">
    <property type="component" value="Chromosome 2"/>
</dbReference>
<dbReference type="GO" id="GO:0005730">
    <property type="term" value="C:nucleolus"/>
    <property type="evidence" value="ECO:0007669"/>
    <property type="project" value="UniProtKB-SubCell"/>
</dbReference>
<dbReference type="GO" id="GO:0032040">
    <property type="term" value="C:small-subunit processome"/>
    <property type="evidence" value="ECO:0007669"/>
    <property type="project" value="EnsemblFungi"/>
</dbReference>
<dbReference type="GO" id="GO:0005524">
    <property type="term" value="F:ATP binding"/>
    <property type="evidence" value="ECO:0007669"/>
    <property type="project" value="UniProtKB-KW"/>
</dbReference>
<dbReference type="GO" id="GO:0016887">
    <property type="term" value="F:ATP hydrolysis activity"/>
    <property type="evidence" value="ECO:0007669"/>
    <property type="project" value="RHEA"/>
</dbReference>
<dbReference type="GO" id="GO:0042802">
    <property type="term" value="F:identical protein binding"/>
    <property type="evidence" value="ECO:0007669"/>
    <property type="project" value="EnsemblFungi"/>
</dbReference>
<dbReference type="GO" id="GO:0003723">
    <property type="term" value="F:RNA binding"/>
    <property type="evidence" value="ECO:0007669"/>
    <property type="project" value="UniProtKB-KW"/>
</dbReference>
<dbReference type="GO" id="GO:0003724">
    <property type="term" value="F:RNA helicase activity"/>
    <property type="evidence" value="ECO:0007669"/>
    <property type="project" value="UniProtKB-EC"/>
</dbReference>
<dbReference type="GO" id="GO:0006364">
    <property type="term" value="P:rRNA processing"/>
    <property type="evidence" value="ECO:0007669"/>
    <property type="project" value="UniProtKB-KW"/>
</dbReference>
<dbReference type="CDD" id="cd17941">
    <property type="entry name" value="DEADc_DDX10"/>
    <property type="match status" value="1"/>
</dbReference>
<dbReference type="CDD" id="cd18787">
    <property type="entry name" value="SF2_C_DEAD"/>
    <property type="match status" value="1"/>
</dbReference>
<dbReference type="Gene3D" id="3.40.50.300">
    <property type="entry name" value="P-loop containing nucleotide triphosphate hydrolases"/>
    <property type="match status" value="2"/>
</dbReference>
<dbReference type="InterPro" id="IPR011545">
    <property type="entry name" value="DEAD/DEAH_box_helicase_dom"/>
</dbReference>
<dbReference type="InterPro" id="IPR014001">
    <property type="entry name" value="Helicase_ATP-bd"/>
</dbReference>
<dbReference type="InterPro" id="IPR001650">
    <property type="entry name" value="Helicase_C-like"/>
</dbReference>
<dbReference type="InterPro" id="IPR027417">
    <property type="entry name" value="P-loop_NTPase"/>
</dbReference>
<dbReference type="InterPro" id="IPR000629">
    <property type="entry name" value="RNA-helicase_DEAD-box_CS"/>
</dbReference>
<dbReference type="InterPro" id="IPR014014">
    <property type="entry name" value="RNA_helicase_DEAD_Q_motif"/>
</dbReference>
<dbReference type="InterPro" id="IPR025313">
    <property type="entry name" value="SPB4-like_CTE"/>
</dbReference>
<dbReference type="PANTHER" id="PTHR24031">
    <property type="entry name" value="RNA HELICASE"/>
    <property type="match status" value="1"/>
</dbReference>
<dbReference type="Pfam" id="PF13959">
    <property type="entry name" value="CTE_SPB4"/>
    <property type="match status" value="1"/>
</dbReference>
<dbReference type="Pfam" id="PF00270">
    <property type="entry name" value="DEAD"/>
    <property type="match status" value="1"/>
</dbReference>
<dbReference type="Pfam" id="PF00271">
    <property type="entry name" value="Helicase_C"/>
    <property type="match status" value="1"/>
</dbReference>
<dbReference type="SMART" id="SM00487">
    <property type="entry name" value="DEXDc"/>
    <property type="match status" value="1"/>
</dbReference>
<dbReference type="SMART" id="SM01178">
    <property type="entry name" value="DUF4217"/>
    <property type="match status" value="1"/>
</dbReference>
<dbReference type="SMART" id="SM00490">
    <property type="entry name" value="HELICc"/>
    <property type="match status" value="1"/>
</dbReference>
<dbReference type="SUPFAM" id="SSF52540">
    <property type="entry name" value="P-loop containing nucleoside triphosphate hydrolases"/>
    <property type="match status" value="2"/>
</dbReference>
<dbReference type="PROSITE" id="PS00039">
    <property type="entry name" value="DEAD_ATP_HELICASE"/>
    <property type="match status" value="1"/>
</dbReference>
<dbReference type="PROSITE" id="PS51192">
    <property type="entry name" value="HELICASE_ATP_BIND_1"/>
    <property type="match status" value="1"/>
</dbReference>
<dbReference type="PROSITE" id="PS51194">
    <property type="entry name" value="HELICASE_CTER"/>
    <property type="match status" value="1"/>
</dbReference>
<dbReference type="PROSITE" id="PS51195">
    <property type="entry name" value="Q_MOTIF"/>
    <property type="match status" value="1"/>
</dbReference>